<keyword id="KW-1185">Reference proteome</keyword>
<dbReference type="EMBL" id="CP000153">
    <property type="protein sequence ID" value="ABB43730.1"/>
    <property type="molecule type" value="Genomic_DNA"/>
</dbReference>
<dbReference type="RefSeq" id="WP_011372084.1">
    <property type="nucleotide sequence ID" value="NC_007575.1"/>
</dbReference>
<dbReference type="STRING" id="326298.Suden_0449"/>
<dbReference type="KEGG" id="tdn:Suden_0449"/>
<dbReference type="eggNOG" id="COG1671">
    <property type="taxonomic scope" value="Bacteria"/>
</dbReference>
<dbReference type="HOGENOM" id="CLU_106619_2_1_7"/>
<dbReference type="OrthoDB" id="9798918at2"/>
<dbReference type="Proteomes" id="UP000002714">
    <property type="component" value="Chromosome"/>
</dbReference>
<dbReference type="CDD" id="cd18720">
    <property type="entry name" value="PIN_YqxD-like"/>
    <property type="match status" value="1"/>
</dbReference>
<dbReference type="HAMAP" id="MF_00489">
    <property type="entry name" value="UPF0178"/>
    <property type="match status" value="1"/>
</dbReference>
<dbReference type="InterPro" id="IPR003791">
    <property type="entry name" value="UPF0178"/>
</dbReference>
<dbReference type="NCBIfam" id="NF001095">
    <property type="entry name" value="PRK00124.1"/>
    <property type="match status" value="1"/>
</dbReference>
<dbReference type="PANTHER" id="PTHR35146">
    <property type="entry name" value="UPF0178 PROTEIN YAII"/>
    <property type="match status" value="1"/>
</dbReference>
<dbReference type="PANTHER" id="PTHR35146:SF1">
    <property type="entry name" value="UPF0178 PROTEIN YAII"/>
    <property type="match status" value="1"/>
</dbReference>
<dbReference type="Pfam" id="PF02639">
    <property type="entry name" value="DUF188"/>
    <property type="match status" value="1"/>
</dbReference>
<gene>
    <name type="ordered locus">Suden_0449</name>
</gene>
<reference key="1">
    <citation type="journal article" date="2008" name="Appl. Environ. Microbiol.">
        <title>Genome of the epsilonproteobacterial chemolithoautotroph Sulfurimonas denitrificans.</title>
        <authorList>
            <person name="Sievert S.M."/>
            <person name="Scott K.M."/>
            <person name="Klotz M.G."/>
            <person name="Chain P.S.G."/>
            <person name="Hauser L.J."/>
            <person name="Hemp J."/>
            <person name="Huegler M."/>
            <person name="Land M."/>
            <person name="Lapidus A."/>
            <person name="Larimer F.W."/>
            <person name="Lucas S."/>
            <person name="Malfatti S.A."/>
            <person name="Meyer F."/>
            <person name="Paulsen I.T."/>
            <person name="Ren Q."/>
            <person name="Simon J."/>
            <person name="Bailey K."/>
            <person name="Diaz E."/>
            <person name="Fitzpatrick K.A."/>
            <person name="Glover B."/>
            <person name="Gwatney N."/>
            <person name="Korajkic A."/>
            <person name="Long A."/>
            <person name="Mobberley J.M."/>
            <person name="Pantry S.N."/>
            <person name="Pazder G."/>
            <person name="Peterson S."/>
            <person name="Quintanilla J.D."/>
            <person name="Sprinkle R."/>
            <person name="Stephens J."/>
            <person name="Thomas P."/>
            <person name="Vaughn R."/>
            <person name="Weber M.J."/>
            <person name="Wooten L.L."/>
        </authorList>
    </citation>
    <scope>NUCLEOTIDE SEQUENCE [LARGE SCALE GENOMIC DNA]</scope>
    <source>
        <strain>ATCC 33889 / DSM 1251</strain>
    </source>
</reference>
<comment type="similarity">
    <text evidence="1">Belongs to the UPF0178 family.</text>
</comment>
<name>Y449_SULDN</name>
<sequence length="151" mass="17149">MRLFIDGDAFPNTLKPILFRSIQRLNLEVFVVSNKPVTIGKSKLIRYLIVEQGADEADNHIVELVEEGDLVITADIPLADRVISKAAHAIDHRGELYSVDNIKHYLAMRNLMEKIRESGEMTKGPKPFNQKDAHQFANQLNKFLAKNIIKI</sequence>
<organism>
    <name type="scientific">Sulfurimonas denitrificans (strain ATCC 33889 / DSM 1251)</name>
    <name type="common">Thiomicrospira denitrificans (strain ATCC 33889 / DSM 1251)</name>
    <dbReference type="NCBI Taxonomy" id="326298"/>
    <lineage>
        <taxon>Bacteria</taxon>
        <taxon>Pseudomonadati</taxon>
        <taxon>Campylobacterota</taxon>
        <taxon>Epsilonproteobacteria</taxon>
        <taxon>Campylobacterales</taxon>
        <taxon>Sulfurimonadaceae</taxon>
        <taxon>Sulfurimonas</taxon>
    </lineage>
</organism>
<protein>
    <recommendedName>
        <fullName evidence="1">UPF0178 protein Suden_0449</fullName>
    </recommendedName>
</protein>
<proteinExistence type="inferred from homology"/>
<evidence type="ECO:0000255" key="1">
    <source>
        <dbReference type="HAMAP-Rule" id="MF_00489"/>
    </source>
</evidence>
<feature type="chain" id="PRO_0000241838" description="UPF0178 protein Suden_0449">
    <location>
        <begin position="1"/>
        <end position="151"/>
    </location>
</feature>
<accession>Q30TF1</accession>